<keyword id="KW-0010">Activator</keyword>
<keyword id="KW-0238">DNA-binding</keyword>
<keyword id="KW-1017">Isopeptide bond</keyword>
<keyword id="KW-0479">Metal-binding</keyword>
<keyword id="KW-0539">Nucleus</keyword>
<keyword id="KW-0597">Phosphoprotein</keyword>
<keyword id="KW-0675">Receptor</keyword>
<keyword id="KW-1185">Reference proteome</keyword>
<keyword id="KW-0678">Repressor</keyword>
<keyword id="KW-0804">Transcription</keyword>
<keyword id="KW-0805">Transcription regulation</keyword>
<keyword id="KW-0832">Ubl conjugation</keyword>
<keyword id="KW-0862">Zinc</keyword>
<keyword id="KW-0863">Zinc-finger</keyword>
<dbReference type="EMBL" id="AB063066">
    <property type="protein sequence ID" value="BAB60786.1"/>
    <property type="molecule type" value="mRNA"/>
</dbReference>
<dbReference type="RefSeq" id="NP_001274567.1">
    <property type="nucleotide sequence ID" value="NM_001287638.1"/>
</dbReference>
<dbReference type="RefSeq" id="XP_005571940.1">
    <property type="nucleotide sequence ID" value="XM_005571883.4"/>
</dbReference>
<dbReference type="RefSeq" id="XP_005571941.1">
    <property type="nucleotide sequence ID" value="XM_005571884.4"/>
</dbReference>
<dbReference type="RefSeq" id="XP_005571942.1">
    <property type="nucleotide sequence ID" value="XM_005571885.4"/>
</dbReference>
<dbReference type="RefSeq" id="XP_045221674.1">
    <property type="nucleotide sequence ID" value="XM_045365739.2"/>
</dbReference>
<dbReference type="STRING" id="9541.ENSMFAP00000009708"/>
<dbReference type="Ensembl" id="ENSMFAT00000036133.2">
    <property type="protein sequence ID" value="ENSMFAP00000009708.1"/>
    <property type="gene ID" value="ENSMFAG00000035305.2"/>
</dbReference>
<dbReference type="GeneID" id="102136205"/>
<dbReference type="CTD" id="7181"/>
<dbReference type="VEuPathDB" id="HostDB:ENSMFAG00000035305"/>
<dbReference type="eggNOG" id="KOG3575">
    <property type="taxonomic scope" value="Eukaryota"/>
</dbReference>
<dbReference type="GeneTree" id="ENSGT00940000158165"/>
<dbReference type="OMA" id="NCGELCV"/>
<dbReference type="Proteomes" id="UP000233100">
    <property type="component" value="Chromosome 11"/>
</dbReference>
<dbReference type="Bgee" id="ENSMFAG00000035305">
    <property type="expression patterns" value="Expressed in cerebellum and 13 other cell types or tissues"/>
</dbReference>
<dbReference type="GO" id="GO:0016605">
    <property type="term" value="C:PML body"/>
    <property type="evidence" value="ECO:0007669"/>
    <property type="project" value="UniProtKB-SubCell"/>
</dbReference>
<dbReference type="GO" id="GO:0001227">
    <property type="term" value="F:DNA-binding transcription repressor activity, RNA polymerase II-specific"/>
    <property type="evidence" value="ECO:0007669"/>
    <property type="project" value="Ensembl"/>
</dbReference>
<dbReference type="GO" id="GO:0042826">
    <property type="term" value="F:histone deacetylase binding"/>
    <property type="evidence" value="ECO:0007669"/>
    <property type="project" value="Ensembl"/>
</dbReference>
<dbReference type="GO" id="GO:0042803">
    <property type="term" value="F:protein homodimerization activity"/>
    <property type="evidence" value="ECO:0007669"/>
    <property type="project" value="Ensembl"/>
</dbReference>
<dbReference type="GO" id="GO:0000978">
    <property type="term" value="F:RNA polymerase II cis-regulatory region sequence-specific DNA binding"/>
    <property type="evidence" value="ECO:0007669"/>
    <property type="project" value="Ensembl"/>
</dbReference>
<dbReference type="GO" id="GO:0008270">
    <property type="term" value="F:zinc ion binding"/>
    <property type="evidence" value="ECO:0007669"/>
    <property type="project" value="UniProtKB-KW"/>
</dbReference>
<dbReference type="GO" id="GO:0048386">
    <property type="term" value="P:positive regulation of retinoic acid receptor signaling pathway"/>
    <property type="evidence" value="ECO:0007669"/>
    <property type="project" value="Ensembl"/>
</dbReference>
<dbReference type="CDD" id="cd06967">
    <property type="entry name" value="NR_DBD_TR2_like"/>
    <property type="match status" value="1"/>
</dbReference>
<dbReference type="CDD" id="cd06952">
    <property type="entry name" value="NR_LBD_TR2_like"/>
    <property type="match status" value="1"/>
</dbReference>
<dbReference type="FunFam" id="1.10.565.10:FF:000012">
    <property type="entry name" value="Nuclear receptor subfamily 2 group C member 1"/>
    <property type="match status" value="1"/>
</dbReference>
<dbReference type="FunFam" id="3.30.50.10:FF:000015">
    <property type="entry name" value="Nuclear receptor subfamily 2, group C, member 1"/>
    <property type="match status" value="1"/>
</dbReference>
<dbReference type="Gene3D" id="3.30.50.10">
    <property type="entry name" value="Erythroid Transcription Factor GATA-1, subunit A"/>
    <property type="match status" value="1"/>
</dbReference>
<dbReference type="Gene3D" id="1.10.565.10">
    <property type="entry name" value="Retinoid X Receptor"/>
    <property type="match status" value="1"/>
</dbReference>
<dbReference type="InterPro" id="IPR035500">
    <property type="entry name" value="NHR-like_dom_sf"/>
</dbReference>
<dbReference type="InterPro" id="IPR048245">
    <property type="entry name" value="NR2C1/2-like_DBD"/>
</dbReference>
<dbReference type="InterPro" id="IPR048246">
    <property type="entry name" value="NR2C1/2-like_LBD"/>
</dbReference>
<dbReference type="InterPro" id="IPR000536">
    <property type="entry name" value="Nucl_hrmn_rcpt_lig-bd"/>
</dbReference>
<dbReference type="InterPro" id="IPR050274">
    <property type="entry name" value="Nuclear_hormone_rcpt_NR2"/>
</dbReference>
<dbReference type="InterPro" id="IPR001723">
    <property type="entry name" value="Nuclear_hrmn_rcpt"/>
</dbReference>
<dbReference type="InterPro" id="IPR001628">
    <property type="entry name" value="Znf_hrmn_rcpt"/>
</dbReference>
<dbReference type="InterPro" id="IPR013088">
    <property type="entry name" value="Znf_NHR/GATA"/>
</dbReference>
<dbReference type="PANTHER" id="PTHR24083">
    <property type="entry name" value="NUCLEAR HORMONE RECEPTOR"/>
    <property type="match status" value="1"/>
</dbReference>
<dbReference type="Pfam" id="PF00104">
    <property type="entry name" value="Hormone_recep"/>
    <property type="match status" value="1"/>
</dbReference>
<dbReference type="Pfam" id="PF00105">
    <property type="entry name" value="zf-C4"/>
    <property type="match status" value="1"/>
</dbReference>
<dbReference type="PRINTS" id="PR00398">
    <property type="entry name" value="STRDHORMONER"/>
</dbReference>
<dbReference type="PRINTS" id="PR00047">
    <property type="entry name" value="STROIDFINGER"/>
</dbReference>
<dbReference type="SMART" id="SM00430">
    <property type="entry name" value="HOLI"/>
    <property type="match status" value="1"/>
</dbReference>
<dbReference type="SMART" id="SM00399">
    <property type="entry name" value="ZnF_C4"/>
    <property type="match status" value="1"/>
</dbReference>
<dbReference type="SUPFAM" id="SSF57716">
    <property type="entry name" value="Glucocorticoid receptor-like (DNA-binding domain)"/>
    <property type="match status" value="1"/>
</dbReference>
<dbReference type="SUPFAM" id="SSF48508">
    <property type="entry name" value="Nuclear receptor ligand-binding domain"/>
    <property type="match status" value="1"/>
</dbReference>
<dbReference type="PROSITE" id="PS51843">
    <property type="entry name" value="NR_LBD"/>
    <property type="match status" value="1"/>
</dbReference>
<dbReference type="PROSITE" id="PS00031">
    <property type="entry name" value="NUCLEAR_REC_DBD_1"/>
    <property type="match status" value="1"/>
</dbReference>
<dbReference type="PROSITE" id="PS51030">
    <property type="entry name" value="NUCLEAR_REC_DBD_2"/>
    <property type="match status" value="1"/>
</dbReference>
<reference key="1">
    <citation type="submission" date="2006-10" db="EMBL/GenBank/DDBJ databases">
        <title>Isolation of full-length cDNA clones from macaque brain cDNA libraries.</title>
        <authorList>
            <person name="Osada N."/>
            <person name="Hida M."/>
            <person name="Kusuda J."/>
            <person name="Tanuma R."/>
            <person name="Iseki K."/>
            <person name="Hirai M."/>
            <person name="Terao K."/>
            <person name="Suzuki Y."/>
            <person name="Sugano S."/>
            <person name="Hashimoto K."/>
        </authorList>
    </citation>
    <scope>NUCLEOTIDE SEQUENCE [LARGE SCALE MRNA]</scope>
    <source>
        <tissue>Medulla oblongata</tissue>
    </source>
</reference>
<accession>Q95K90</accession>
<protein>
    <recommendedName>
        <fullName>Nuclear receptor subfamily 2 group C member 1</fullName>
    </recommendedName>
</protein>
<proteinExistence type="evidence at transcript level"/>
<evidence type="ECO:0000250" key="1"/>
<evidence type="ECO:0000250" key="2">
    <source>
        <dbReference type="UniProtKB" id="P13056"/>
    </source>
</evidence>
<evidence type="ECO:0000250" key="3">
    <source>
        <dbReference type="UniProtKB" id="Q505F1"/>
    </source>
</evidence>
<evidence type="ECO:0000255" key="4">
    <source>
        <dbReference type="PROSITE-ProRule" id="PRU00407"/>
    </source>
</evidence>
<evidence type="ECO:0000255" key="5">
    <source>
        <dbReference type="PROSITE-ProRule" id="PRU01189"/>
    </source>
</evidence>
<evidence type="ECO:0000305" key="6"/>
<organism>
    <name type="scientific">Macaca fascicularis</name>
    <name type="common">Crab-eating macaque</name>
    <name type="synonym">Cynomolgus monkey</name>
    <dbReference type="NCBI Taxonomy" id="9541"/>
    <lineage>
        <taxon>Eukaryota</taxon>
        <taxon>Metazoa</taxon>
        <taxon>Chordata</taxon>
        <taxon>Craniata</taxon>
        <taxon>Vertebrata</taxon>
        <taxon>Euteleostomi</taxon>
        <taxon>Mammalia</taxon>
        <taxon>Eutheria</taxon>
        <taxon>Euarchontoglires</taxon>
        <taxon>Primates</taxon>
        <taxon>Haplorrhini</taxon>
        <taxon>Catarrhini</taxon>
        <taxon>Cercopithecidae</taxon>
        <taxon>Cercopithecinae</taxon>
        <taxon>Macaca</taxon>
    </lineage>
</organism>
<name>NR2C1_MACFA</name>
<gene>
    <name type="primary">NR2C1</name>
    <name type="ORF">QmoA-12557</name>
</gene>
<feature type="chain" id="PRO_0000369403" description="Nuclear receptor subfamily 2 group C member 1">
    <location>
        <begin position="1"/>
        <end position="603"/>
    </location>
</feature>
<feature type="domain" description="NR LBD" evidence="5">
    <location>
        <begin position="348"/>
        <end position="590"/>
    </location>
</feature>
<feature type="DNA-binding region" description="Nuclear receptor" evidence="4">
    <location>
        <begin position="110"/>
        <end position="185"/>
    </location>
</feature>
<feature type="zinc finger region" description="NR C4-type" evidence="4">
    <location>
        <begin position="113"/>
        <end position="133"/>
    </location>
</feature>
<feature type="zinc finger region" description="NR C4-type" evidence="4">
    <location>
        <begin position="149"/>
        <end position="168"/>
    </location>
</feature>
<feature type="region of interest" description="Required for interaction with KAT2B" evidence="1">
    <location>
        <begin position="1"/>
        <end position="178"/>
    </location>
</feature>
<feature type="region of interest" description="Required for interaction with NRIP1" evidence="1">
    <location>
        <begin position="584"/>
        <end position="603"/>
    </location>
</feature>
<feature type="modified residue" description="Phosphoserine" evidence="3">
    <location>
        <position position="197"/>
    </location>
</feature>
<feature type="modified residue" description="Phosphoserine" evidence="2">
    <location>
        <position position="215"/>
    </location>
</feature>
<feature type="modified residue" description="Phosphothreonine" evidence="2">
    <location>
        <position position="220"/>
    </location>
</feature>
<feature type="modified residue" description="Phosphothreonine; by MAPK1" evidence="3">
    <location>
        <position position="222"/>
    </location>
</feature>
<feature type="modified residue" description="Phosphoserine; by PKC" evidence="3">
    <location>
        <position position="581"/>
    </location>
</feature>
<feature type="cross-link" description="Glycyl lysine isopeptide (Lys-Gly) (interchain with G-Cter in SUMO); alternate" evidence="1">
    <location>
        <position position="250"/>
    </location>
</feature>
<feature type="cross-link" description="Glycyl lysine isopeptide (Lys-Gly) (interchain with G-Cter in SUMO2); alternate" evidence="2">
    <location>
        <position position="250"/>
    </location>
</feature>
<feature type="cross-link" description="Glycyl lysine isopeptide (Lys-Gly) (interchain with G-Cter in SUMO2)" evidence="2">
    <location>
        <position position="588"/>
    </location>
</feature>
<sequence>MATIEEIAHQIIEQQMGEIVTEQQTGQKIQIVTALDHNTQGKQFILTNHDGSTPSKVILARQDSTPGKVFLTPDAAGVNQLFFTTPDLSAQHLQLLTDNSSPDQGPNKVFDLCVVCGDKASGRHYGAVTCEGCKGFFKRSIRKNLVYSCRGSKDCIINKHHRNRCQYCRLQRCIAFGMKQDSVQCERKPIEVSREKSSNCAASTEKIYIRKDLRSPLTATPTFVTDSETTRSTGLLDSGMFVNIHPSGVKTESTVLMTSDKAESCQGDLSTLASVVTSLANLGKTKDLSQNSNEMSMIESLSNDDTSLCEFQEMQTNGDVSRAFDTLAKALNPGESTACQSSVAGMEGSVHLITGDSSINYTEKEGPLLSDSHVAFRLTMPSPMPEYLNVHYIGESASRLLFLSMHWALSIPSFQALGQENSISLVKAYWNELFTLGLAQCWQVMNVATILATFVNCLHNSLQQDKMSTERRKLLMEHIFKLQEFCNSMVKLCIDGYEYAYLKAIVLFSPDHPGLENMEQIEKFQEKAYVEFQDYITKTYPDDTYRLSRLLLRLPALRLMNATITEELFFKGLIGNIRIDSVIPHILKMEPADYNSQIIGHSI</sequence>
<comment type="function">
    <text evidence="1">Orphan nuclear receptor. Binds the IR7 element in the promoter of its own gene in an autoregulatory negative feedback mechanism. Primarily repressor of a broad range of genes. Binds to hormone response elements (HREs) consisting of two 5'-AGGTCA-3' half site direct repeat consensus sequences. Together with NR2C2, forms the core of the DRED (direct repeat erythroid-definitive) complex that represses embryonic and fetal globin transcription. Also activator of OCT4 gene expression. May be involved in stem cell proliferation and differentiation. Mediator of retinoic acid-regulated preadipocyte proliferation (By similarity).</text>
</comment>
<comment type="subunit">
    <text evidence="1">Homodimer (By similarity). Heterodimer; binds DNA as a heterodimer with NR2C2 required for chromatin remodeling and for binding to promoter regions such as globin DR1 repeats (By similarity). Interacts with ESR1; the interaction prevents homodimerization of ESR1 and suppresses its transcriptional activity and cell growth. Interacts with NRIP1 (via its LXXLL motifs); the interaction provides corepressor activity. Interacts with HDAC3 (via the DNA-binding domain). Interacts with HDAC4 (via the DNA-binding domain). Interacts with PIAS1; the interaction is required for sumoylation of NR2C1. Interacts with UBE2I; the interaction is required for sumoylation of NR2C1. Interacts with KAT2B; the interaction acts as a corepressor of gene expression (By similarity).</text>
</comment>
<comment type="subcellular location">
    <subcellularLocation>
        <location evidence="4">Nucleus</location>
    </subcellularLocation>
    <subcellularLocation>
        <location evidence="1">Nucleus</location>
        <location evidence="1">PML body</location>
    </subcellularLocation>
    <text evidence="1">Recruited by HDAC3, after all-trans retinoic acid stimulated MAPK1-mediated Thr-220 phosphorylation, to PML bodies for subsequent sumoylation.</text>
</comment>
<comment type="PTM">
    <text evidence="1">Sumoylation requires both PIAS1 and UBE2I. Sumoylation appears to dissociate NR2C1 from the PML nuclear bodies. Enhances the interaction with NRIP1 but inhibits interaction with KAT2B. In proliferating cells, stimulation by all-trans retinoic acid, activation of MAPK1-mediated phosphorylation and recruitment to PML bodies with subsequent sumoylation, suppresses OCT4 expression (By similarity).</text>
</comment>
<comment type="PTM">
    <text evidence="1">Phosphorylated on several serine and threonine residues. Phosphorylation on Thr-220, stimulated by all-trans retinoic acid (atRA) mediates PML location and sumoylation in proliferating cells which then modulates its association with effector molecules, KAT2B and NRIP1. Phosphorylation on Ser-581 by PKC is important for protein stability and function as activator of RARB (By similarity).</text>
</comment>
<comment type="similarity">
    <text evidence="6">Belongs to the nuclear hormone receptor family. NR2 subfamily.</text>
</comment>